<gene>
    <name evidence="1" type="primary">rhlB</name>
    <name type="ordered locus">ETA_01940</name>
</gene>
<protein>
    <recommendedName>
        <fullName evidence="1">ATP-dependent RNA helicase RhlB</fullName>
        <ecNumber evidence="1">3.6.4.13</ecNumber>
    </recommendedName>
</protein>
<reference key="1">
    <citation type="journal article" date="2008" name="Environ. Microbiol.">
        <title>The genome of Erwinia tasmaniensis strain Et1/99, a non-pathogenic bacterium in the genus Erwinia.</title>
        <authorList>
            <person name="Kube M."/>
            <person name="Migdoll A.M."/>
            <person name="Mueller I."/>
            <person name="Kuhl H."/>
            <person name="Beck A."/>
            <person name="Reinhardt R."/>
            <person name="Geider K."/>
        </authorList>
    </citation>
    <scope>NUCLEOTIDE SEQUENCE [LARGE SCALE GENOMIC DNA]</scope>
    <source>
        <strain>DSM 17950 / CFBP 7177 / CIP 109463 / NCPPB 4357 / Et1/99</strain>
    </source>
</reference>
<dbReference type="EC" id="3.6.4.13" evidence="1"/>
<dbReference type="EMBL" id="CU468135">
    <property type="protein sequence ID" value="CAO95240.1"/>
    <property type="molecule type" value="Genomic_DNA"/>
</dbReference>
<dbReference type="RefSeq" id="WP_012439960.1">
    <property type="nucleotide sequence ID" value="NC_010694.1"/>
</dbReference>
<dbReference type="SMR" id="B2VG58"/>
<dbReference type="STRING" id="465817.ETA_01940"/>
<dbReference type="KEGG" id="eta:ETA_01940"/>
<dbReference type="eggNOG" id="COG0513">
    <property type="taxonomic scope" value="Bacteria"/>
</dbReference>
<dbReference type="HOGENOM" id="CLU_003041_1_3_6"/>
<dbReference type="OrthoDB" id="9805696at2"/>
<dbReference type="Proteomes" id="UP000001726">
    <property type="component" value="Chromosome"/>
</dbReference>
<dbReference type="GO" id="GO:0005829">
    <property type="term" value="C:cytosol"/>
    <property type="evidence" value="ECO:0007669"/>
    <property type="project" value="TreeGrafter"/>
</dbReference>
<dbReference type="GO" id="GO:0005524">
    <property type="term" value="F:ATP binding"/>
    <property type="evidence" value="ECO:0007669"/>
    <property type="project" value="UniProtKB-UniRule"/>
</dbReference>
<dbReference type="GO" id="GO:0016887">
    <property type="term" value="F:ATP hydrolysis activity"/>
    <property type="evidence" value="ECO:0007669"/>
    <property type="project" value="RHEA"/>
</dbReference>
<dbReference type="GO" id="GO:0003723">
    <property type="term" value="F:RNA binding"/>
    <property type="evidence" value="ECO:0007669"/>
    <property type="project" value="UniProtKB-UniRule"/>
</dbReference>
<dbReference type="GO" id="GO:0003724">
    <property type="term" value="F:RNA helicase activity"/>
    <property type="evidence" value="ECO:0007669"/>
    <property type="project" value="UniProtKB-UniRule"/>
</dbReference>
<dbReference type="GO" id="GO:0006401">
    <property type="term" value="P:RNA catabolic process"/>
    <property type="evidence" value="ECO:0007669"/>
    <property type="project" value="UniProtKB-UniRule"/>
</dbReference>
<dbReference type="CDD" id="cd00268">
    <property type="entry name" value="DEADc"/>
    <property type="match status" value="1"/>
</dbReference>
<dbReference type="CDD" id="cd18787">
    <property type="entry name" value="SF2_C_DEAD"/>
    <property type="match status" value="1"/>
</dbReference>
<dbReference type="FunFam" id="3.40.50.300:FF:000312">
    <property type="entry name" value="ATP-dependent RNA helicase RhlB"/>
    <property type="match status" value="1"/>
</dbReference>
<dbReference type="Gene3D" id="3.40.50.300">
    <property type="entry name" value="P-loop containing nucleotide triphosphate hydrolases"/>
    <property type="match status" value="2"/>
</dbReference>
<dbReference type="HAMAP" id="MF_00661">
    <property type="entry name" value="DEAD_helicase_RhlB"/>
    <property type="match status" value="1"/>
</dbReference>
<dbReference type="InterPro" id="IPR011545">
    <property type="entry name" value="DEAD/DEAH_box_helicase_dom"/>
</dbReference>
<dbReference type="InterPro" id="IPR050079">
    <property type="entry name" value="DEAD_box_RNA_helicase"/>
</dbReference>
<dbReference type="InterPro" id="IPR014001">
    <property type="entry name" value="Helicase_ATP-bd"/>
</dbReference>
<dbReference type="InterPro" id="IPR001650">
    <property type="entry name" value="Helicase_C-like"/>
</dbReference>
<dbReference type="InterPro" id="IPR027417">
    <property type="entry name" value="P-loop_NTPase"/>
</dbReference>
<dbReference type="InterPro" id="IPR000629">
    <property type="entry name" value="RNA-helicase_DEAD-box_CS"/>
</dbReference>
<dbReference type="InterPro" id="IPR023554">
    <property type="entry name" value="RNA_helicase_ATP-dep_RhlB"/>
</dbReference>
<dbReference type="InterPro" id="IPR014014">
    <property type="entry name" value="RNA_helicase_DEAD_Q_motif"/>
</dbReference>
<dbReference type="NCBIfam" id="NF003419">
    <property type="entry name" value="PRK04837.1"/>
    <property type="match status" value="1"/>
</dbReference>
<dbReference type="PANTHER" id="PTHR47959:SF10">
    <property type="entry name" value="ATP-DEPENDENT RNA HELICASE RHLB"/>
    <property type="match status" value="1"/>
</dbReference>
<dbReference type="PANTHER" id="PTHR47959">
    <property type="entry name" value="ATP-DEPENDENT RNA HELICASE RHLE-RELATED"/>
    <property type="match status" value="1"/>
</dbReference>
<dbReference type="Pfam" id="PF00270">
    <property type="entry name" value="DEAD"/>
    <property type="match status" value="1"/>
</dbReference>
<dbReference type="Pfam" id="PF00271">
    <property type="entry name" value="Helicase_C"/>
    <property type="match status" value="1"/>
</dbReference>
<dbReference type="SMART" id="SM00487">
    <property type="entry name" value="DEXDc"/>
    <property type="match status" value="1"/>
</dbReference>
<dbReference type="SMART" id="SM00490">
    <property type="entry name" value="HELICc"/>
    <property type="match status" value="1"/>
</dbReference>
<dbReference type="SUPFAM" id="SSF52540">
    <property type="entry name" value="P-loop containing nucleoside triphosphate hydrolases"/>
    <property type="match status" value="1"/>
</dbReference>
<dbReference type="PROSITE" id="PS00039">
    <property type="entry name" value="DEAD_ATP_HELICASE"/>
    <property type="match status" value="1"/>
</dbReference>
<dbReference type="PROSITE" id="PS51192">
    <property type="entry name" value="HELICASE_ATP_BIND_1"/>
    <property type="match status" value="1"/>
</dbReference>
<dbReference type="PROSITE" id="PS51194">
    <property type="entry name" value="HELICASE_CTER"/>
    <property type="match status" value="1"/>
</dbReference>
<dbReference type="PROSITE" id="PS51195">
    <property type="entry name" value="Q_MOTIF"/>
    <property type="match status" value="1"/>
</dbReference>
<evidence type="ECO:0000255" key="1">
    <source>
        <dbReference type="HAMAP-Rule" id="MF_00661"/>
    </source>
</evidence>
<evidence type="ECO:0000256" key="2">
    <source>
        <dbReference type="SAM" id="MobiDB-lite"/>
    </source>
</evidence>
<accession>B2VG58</accession>
<organism>
    <name type="scientific">Erwinia tasmaniensis (strain DSM 17950 / CFBP 7177 / CIP 109463 / NCPPB 4357 / Et1/99)</name>
    <dbReference type="NCBI Taxonomy" id="465817"/>
    <lineage>
        <taxon>Bacteria</taxon>
        <taxon>Pseudomonadati</taxon>
        <taxon>Pseudomonadota</taxon>
        <taxon>Gammaproteobacteria</taxon>
        <taxon>Enterobacterales</taxon>
        <taxon>Erwiniaceae</taxon>
        <taxon>Erwinia</taxon>
    </lineage>
</organism>
<feature type="chain" id="PRO_1000131294" description="ATP-dependent RNA helicase RhlB">
    <location>
        <begin position="1"/>
        <end position="430"/>
    </location>
</feature>
<feature type="domain" description="Helicase ATP-binding" evidence="1">
    <location>
        <begin position="40"/>
        <end position="219"/>
    </location>
</feature>
<feature type="domain" description="Helicase C-terminal" evidence="1">
    <location>
        <begin position="245"/>
        <end position="390"/>
    </location>
</feature>
<feature type="region of interest" description="Disordered" evidence="2">
    <location>
        <begin position="388"/>
        <end position="430"/>
    </location>
</feature>
<feature type="short sequence motif" description="Q motif">
    <location>
        <begin position="9"/>
        <end position="37"/>
    </location>
</feature>
<feature type="short sequence motif" description="DEAD box">
    <location>
        <begin position="165"/>
        <end position="168"/>
    </location>
</feature>
<feature type="compositionally biased region" description="Low complexity" evidence="2">
    <location>
        <begin position="402"/>
        <end position="423"/>
    </location>
</feature>
<feature type="binding site" evidence="1">
    <location>
        <begin position="53"/>
        <end position="60"/>
    </location>
    <ligand>
        <name>ATP</name>
        <dbReference type="ChEBI" id="CHEBI:30616"/>
    </ligand>
</feature>
<comment type="function">
    <text evidence="1">DEAD-box RNA helicase involved in RNA degradation. Has RNA-dependent ATPase activity and unwinds double-stranded RNA.</text>
</comment>
<comment type="catalytic activity">
    <reaction evidence="1">
        <text>ATP + H2O = ADP + phosphate + H(+)</text>
        <dbReference type="Rhea" id="RHEA:13065"/>
        <dbReference type="ChEBI" id="CHEBI:15377"/>
        <dbReference type="ChEBI" id="CHEBI:15378"/>
        <dbReference type="ChEBI" id="CHEBI:30616"/>
        <dbReference type="ChEBI" id="CHEBI:43474"/>
        <dbReference type="ChEBI" id="CHEBI:456216"/>
        <dbReference type="EC" id="3.6.4.13"/>
    </reaction>
</comment>
<comment type="subunit">
    <text evidence="1">Component of the RNA degradosome, which is a multiprotein complex involved in RNA processing and mRNA degradation.</text>
</comment>
<comment type="subcellular location">
    <subcellularLocation>
        <location evidence="1">Cytoplasm</location>
    </subcellularLocation>
</comment>
<comment type="similarity">
    <text evidence="1">Belongs to the DEAD box helicase family. RhlB subfamily.</text>
</comment>
<keyword id="KW-0067">ATP-binding</keyword>
<keyword id="KW-0963">Cytoplasm</keyword>
<keyword id="KW-0347">Helicase</keyword>
<keyword id="KW-0378">Hydrolase</keyword>
<keyword id="KW-0547">Nucleotide-binding</keyword>
<keyword id="KW-1185">Reference proteome</keyword>
<keyword id="KW-0694">RNA-binding</keyword>
<proteinExistence type="inferred from homology"/>
<sequence>MSKTHLTEQKFSDFALHPQVIEALETKGFHNCTPIQALALPFTLSGRDVAGQAQTGTGKTMAFLTSTFHHLLSHPAPEGRQTNQPRALILAPTRELAVQIHADAEPLAQITGLKLGLAYGGDGYDKQLKVLENGVDVLIGTTGRLIDYAKQNHVNLGAIQVVVLDEADRMFDLGFIKDIRWLFRRMPAANQRLNMLFSATLSFRVRELAFENMNNAEYVEVEPDQKTGHRIKEELFYPSNEEKMRLLQTLIEEEWPDRTIIFANTKHRCEDVWGHLAADGHRVGLLTGDVAQKKRLRILDDFTKGDVDILVATDVAARGLHIPAVTHVFNYDLPDDREDYVHRIGRTGRAGANGHSISLACEEYALNLPAIEEYIGHSITVSRYNSDALMTDLPPPKRLTRNRSGNGPRRGGNNNRRSSASRSPNRKRSG</sequence>
<name>RHLB_ERWT9</name>